<gene>
    <name type="ordered locus">RHOS4_03690</name>
    <name type="ORF">RSP_1789</name>
</gene>
<dbReference type="EMBL" id="CP000143">
    <property type="protein sequence ID" value="ABA77937.1"/>
    <property type="molecule type" value="Genomic_DNA"/>
</dbReference>
<dbReference type="RefSeq" id="WP_011336987.1">
    <property type="nucleotide sequence ID" value="NC_007493.2"/>
</dbReference>
<dbReference type="RefSeq" id="YP_351838.1">
    <property type="nucleotide sequence ID" value="NC_007493.2"/>
</dbReference>
<dbReference type="SMR" id="Q3J5J7"/>
<dbReference type="STRING" id="272943.RSP_1789"/>
<dbReference type="EnsemblBacteria" id="ABA77937">
    <property type="protein sequence ID" value="ABA77937"/>
    <property type="gene ID" value="RSP_1789"/>
</dbReference>
<dbReference type="GeneID" id="3719015"/>
<dbReference type="KEGG" id="rsp:RSP_1789"/>
<dbReference type="PATRIC" id="fig|272943.9.peg.670"/>
<dbReference type="eggNOG" id="COG1742">
    <property type="taxonomic scope" value="Bacteria"/>
</dbReference>
<dbReference type="OrthoDB" id="123240at2"/>
<dbReference type="PhylomeDB" id="Q3J5J7"/>
<dbReference type="Proteomes" id="UP000002703">
    <property type="component" value="Chromosome 1"/>
</dbReference>
<dbReference type="GO" id="GO:0005886">
    <property type="term" value="C:plasma membrane"/>
    <property type="evidence" value="ECO:0007669"/>
    <property type="project" value="UniProtKB-SubCell"/>
</dbReference>
<dbReference type="HAMAP" id="MF_00010">
    <property type="entry name" value="UPF0060"/>
    <property type="match status" value="1"/>
</dbReference>
<dbReference type="InterPro" id="IPR003844">
    <property type="entry name" value="UPF0060"/>
</dbReference>
<dbReference type="NCBIfam" id="NF002586">
    <property type="entry name" value="PRK02237.1"/>
    <property type="match status" value="1"/>
</dbReference>
<dbReference type="PANTHER" id="PTHR36116">
    <property type="entry name" value="UPF0060 MEMBRANE PROTEIN YNFA"/>
    <property type="match status" value="1"/>
</dbReference>
<dbReference type="PANTHER" id="PTHR36116:SF1">
    <property type="entry name" value="UPF0060 MEMBRANE PROTEIN YNFA"/>
    <property type="match status" value="1"/>
</dbReference>
<dbReference type="Pfam" id="PF02694">
    <property type="entry name" value="UPF0060"/>
    <property type="match status" value="1"/>
</dbReference>
<dbReference type="SUPFAM" id="SSF103481">
    <property type="entry name" value="Multidrug resistance efflux transporter EmrE"/>
    <property type="match status" value="1"/>
</dbReference>
<sequence length="108" mass="11219">MGLSLAAYAGAALAEIAGCFAVWAWWRLGASALWLVPGALSLGTFAWLLALTPVEAAGRSYAVYGGVYVAASLLWLWAVEGVRPDRWDMGGAALVLAGAAVILWAPRG</sequence>
<organism>
    <name type="scientific">Cereibacter sphaeroides (strain ATCC 17023 / DSM 158 / JCM 6121 / CCUG 31486 / LMG 2827 / NBRC 12203 / NCIMB 8253 / ATH 2.4.1.)</name>
    <name type="common">Rhodobacter sphaeroides</name>
    <dbReference type="NCBI Taxonomy" id="272943"/>
    <lineage>
        <taxon>Bacteria</taxon>
        <taxon>Pseudomonadati</taxon>
        <taxon>Pseudomonadota</taxon>
        <taxon>Alphaproteobacteria</taxon>
        <taxon>Rhodobacterales</taxon>
        <taxon>Paracoccaceae</taxon>
        <taxon>Cereibacter</taxon>
    </lineage>
</organism>
<feature type="chain" id="PRO_0000282258" description="UPF0060 membrane protein RHOS4_03690">
    <location>
        <begin position="1"/>
        <end position="108"/>
    </location>
</feature>
<feature type="transmembrane region" description="Helical" evidence="1">
    <location>
        <begin position="5"/>
        <end position="25"/>
    </location>
</feature>
<feature type="transmembrane region" description="Helical" evidence="1">
    <location>
        <begin position="32"/>
        <end position="52"/>
    </location>
</feature>
<feature type="transmembrane region" description="Helical" evidence="1">
    <location>
        <begin position="62"/>
        <end position="82"/>
    </location>
</feature>
<feature type="transmembrane region" description="Helical" evidence="1">
    <location>
        <begin position="86"/>
        <end position="106"/>
    </location>
</feature>
<keyword id="KW-0997">Cell inner membrane</keyword>
<keyword id="KW-1003">Cell membrane</keyword>
<keyword id="KW-0472">Membrane</keyword>
<keyword id="KW-1185">Reference proteome</keyword>
<keyword id="KW-0812">Transmembrane</keyword>
<keyword id="KW-1133">Transmembrane helix</keyword>
<proteinExistence type="inferred from homology"/>
<evidence type="ECO:0000255" key="1">
    <source>
        <dbReference type="HAMAP-Rule" id="MF_00010"/>
    </source>
</evidence>
<comment type="subcellular location">
    <subcellularLocation>
        <location evidence="1">Cell inner membrane</location>
        <topology evidence="1">Multi-pass membrane protein</topology>
    </subcellularLocation>
</comment>
<comment type="similarity">
    <text evidence="1">Belongs to the UPF0060 family.</text>
</comment>
<reference key="1">
    <citation type="submission" date="2005-09" db="EMBL/GenBank/DDBJ databases">
        <title>Complete sequence of chromosome 1 of Rhodobacter sphaeroides 2.4.1.</title>
        <authorList>
            <person name="Copeland A."/>
            <person name="Lucas S."/>
            <person name="Lapidus A."/>
            <person name="Barry K."/>
            <person name="Detter J.C."/>
            <person name="Glavina T."/>
            <person name="Hammon N."/>
            <person name="Israni S."/>
            <person name="Pitluck S."/>
            <person name="Richardson P."/>
            <person name="Mackenzie C."/>
            <person name="Choudhary M."/>
            <person name="Larimer F."/>
            <person name="Hauser L.J."/>
            <person name="Land M."/>
            <person name="Donohue T.J."/>
            <person name="Kaplan S."/>
        </authorList>
    </citation>
    <scope>NUCLEOTIDE SEQUENCE [LARGE SCALE GENOMIC DNA]</scope>
    <source>
        <strain>ATCC 17023 / DSM 158 / JCM 6121 / CCUG 31486 / LMG 2827 / NBRC 12203 / NCIMB 8253 / ATH 2.4.1.</strain>
    </source>
</reference>
<protein>
    <recommendedName>
        <fullName evidence="1">UPF0060 membrane protein RHOS4_03690</fullName>
    </recommendedName>
</protein>
<accession>Q3J5J7</accession>
<name>Y369_CERS4</name>